<gene>
    <name evidence="1" type="primary">rpiA</name>
    <name type="ordered locus">BB3408</name>
</gene>
<accession>Q7WH03</accession>
<proteinExistence type="inferred from homology"/>
<keyword id="KW-0413">Isomerase</keyword>
<sequence>MLTQQELKQQAAEAALELVEQVAGPDVIIGVGTGSTADLFIDGLARFKGRLRGTVASSERSAARLAGHGLAVLDLNDVQSMPIYVDGADEIDPNLHMIKGGGGALTREKIVASVARRYICIADESKLVERLGRFPLPVEVIPMARNAVARGLSRLGGQPALREGFVTDNGNIILDVAGLSIADAPGLEKTINDIPGVVTCGLFALAGADVALLATQDGIRRLERRG</sequence>
<organism>
    <name type="scientific">Bordetella bronchiseptica (strain ATCC BAA-588 / NCTC 13252 / RB50)</name>
    <name type="common">Alcaligenes bronchisepticus</name>
    <dbReference type="NCBI Taxonomy" id="257310"/>
    <lineage>
        <taxon>Bacteria</taxon>
        <taxon>Pseudomonadati</taxon>
        <taxon>Pseudomonadota</taxon>
        <taxon>Betaproteobacteria</taxon>
        <taxon>Burkholderiales</taxon>
        <taxon>Alcaligenaceae</taxon>
        <taxon>Bordetella</taxon>
    </lineage>
</organism>
<feature type="chain" id="PRO_0000158391" description="Ribose-5-phosphate isomerase A">
    <location>
        <begin position="1"/>
        <end position="226"/>
    </location>
</feature>
<feature type="active site" description="Proton acceptor" evidence="1">
    <location>
        <position position="108"/>
    </location>
</feature>
<feature type="binding site" evidence="1">
    <location>
        <begin position="33"/>
        <end position="36"/>
    </location>
    <ligand>
        <name>substrate</name>
    </ligand>
</feature>
<feature type="binding site" evidence="1">
    <location>
        <begin position="86"/>
        <end position="89"/>
    </location>
    <ligand>
        <name>substrate</name>
    </ligand>
</feature>
<feature type="binding site" evidence="1">
    <location>
        <begin position="99"/>
        <end position="102"/>
    </location>
    <ligand>
        <name>substrate</name>
    </ligand>
</feature>
<feature type="binding site" evidence="1">
    <location>
        <position position="126"/>
    </location>
    <ligand>
        <name>substrate</name>
    </ligand>
</feature>
<protein>
    <recommendedName>
        <fullName evidence="1">Ribose-5-phosphate isomerase A</fullName>
        <ecNumber evidence="1">5.3.1.6</ecNumber>
    </recommendedName>
    <alternativeName>
        <fullName evidence="1">Phosphoriboisomerase A</fullName>
        <shortName evidence="1">PRI</shortName>
    </alternativeName>
</protein>
<comment type="function">
    <text evidence="1">Catalyzes the reversible conversion of ribose-5-phosphate to ribulose 5-phosphate.</text>
</comment>
<comment type="catalytic activity">
    <reaction evidence="1">
        <text>aldehydo-D-ribose 5-phosphate = D-ribulose 5-phosphate</text>
        <dbReference type="Rhea" id="RHEA:14657"/>
        <dbReference type="ChEBI" id="CHEBI:58121"/>
        <dbReference type="ChEBI" id="CHEBI:58273"/>
        <dbReference type="EC" id="5.3.1.6"/>
    </reaction>
</comment>
<comment type="pathway">
    <text evidence="1">Carbohydrate degradation; pentose phosphate pathway; D-ribose 5-phosphate from D-ribulose 5-phosphate (non-oxidative stage): step 1/1.</text>
</comment>
<comment type="subunit">
    <text evidence="1">Homodimer.</text>
</comment>
<comment type="similarity">
    <text evidence="1">Belongs to the ribose 5-phosphate isomerase family.</text>
</comment>
<name>RPIA_BORBR</name>
<dbReference type="EC" id="5.3.1.6" evidence="1"/>
<dbReference type="EMBL" id="BX640447">
    <property type="protein sequence ID" value="CAE33900.1"/>
    <property type="molecule type" value="Genomic_DNA"/>
</dbReference>
<dbReference type="RefSeq" id="WP_010926809.1">
    <property type="nucleotide sequence ID" value="NC_002927.3"/>
</dbReference>
<dbReference type="SMR" id="Q7WH03"/>
<dbReference type="KEGG" id="bbr:BB3408"/>
<dbReference type="eggNOG" id="COG0120">
    <property type="taxonomic scope" value="Bacteria"/>
</dbReference>
<dbReference type="HOGENOM" id="CLU_056590_1_1_4"/>
<dbReference type="UniPathway" id="UPA00115">
    <property type="reaction ID" value="UER00412"/>
</dbReference>
<dbReference type="Proteomes" id="UP000001027">
    <property type="component" value="Chromosome"/>
</dbReference>
<dbReference type="GO" id="GO:0005829">
    <property type="term" value="C:cytosol"/>
    <property type="evidence" value="ECO:0007669"/>
    <property type="project" value="TreeGrafter"/>
</dbReference>
<dbReference type="GO" id="GO:0004751">
    <property type="term" value="F:ribose-5-phosphate isomerase activity"/>
    <property type="evidence" value="ECO:0007669"/>
    <property type="project" value="UniProtKB-UniRule"/>
</dbReference>
<dbReference type="GO" id="GO:0006014">
    <property type="term" value="P:D-ribose metabolic process"/>
    <property type="evidence" value="ECO:0007669"/>
    <property type="project" value="TreeGrafter"/>
</dbReference>
<dbReference type="GO" id="GO:0009052">
    <property type="term" value="P:pentose-phosphate shunt, non-oxidative branch"/>
    <property type="evidence" value="ECO:0007669"/>
    <property type="project" value="UniProtKB-UniRule"/>
</dbReference>
<dbReference type="CDD" id="cd01398">
    <property type="entry name" value="RPI_A"/>
    <property type="match status" value="1"/>
</dbReference>
<dbReference type="FunFam" id="3.40.50.1360:FF:000001">
    <property type="entry name" value="Ribose-5-phosphate isomerase A"/>
    <property type="match status" value="1"/>
</dbReference>
<dbReference type="Gene3D" id="3.30.70.260">
    <property type="match status" value="1"/>
</dbReference>
<dbReference type="Gene3D" id="3.40.50.1360">
    <property type="match status" value="1"/>
</dbReference>
<dbReference type="HAMAP" id="MF_00170">
    <property type="entry name" value="Rib_5P_isom_A"/>
    <property type="match status" value="1"/>
</dbReference>
<dbReference type="InterPro" id="IPR037171">
    <property type="entry name" value="NagB/RpiA_transferase-like"/>
</dbReference>
<dbReference type="InterPro" id="IPR020672">
    <property type="entry name" value="Ribose5P_isomerase_typA_subgr"/>
</dbReference>
<dbReference type="InterPro" id="IPR004788">
    <property type="entry name" value="Ribose5P_isomerase_type_A"/>
</dbReference>
<dbReference type="NCBIfam" id="NF001924">
    <property type="entry name" value="PRK00702.1"/>
    <property type="match status" value="1"/>
</dbReference>
<dbReference type="NCBIfam" id="TIGR00021">
    <property type="entry name" value="rpiA"/>
    <property type="match status" value="1"/>
</dbReference>
<dbReference type="PANTHER" id="PTHR11934">
    <property type="entry name" value="RIBOSE-5-PHOSPHATE ISOMERASE"/>
    <property type="match status" value="1"/>
</dbReference>
<dbReference type="PANTHER" id="PTHR11934:SF0">
    <property type="entry name" value="RIBOSE-5-PHOSPHATE ISOMERASE"/>
    <property type="match status" value="1"/>
</dbReference>
<dbReference type="Pfam" id="PF06026">
    <property type="entry name" value="Rib_5-P_isom_A"/>
    <property type="match status" value="1"/>
</dbReference>
<dbReference type="SUPFAM" id="SSF75445">
    <property type="entry name" value="D-ribose-5-phosphate isomerase (RpiA), lid domain"/>
    <property type="match status" value="1"/>
</dbReference>
<dbReference type="SUPFAM" id="SSF100950">
    <property type="entry name" value="NagB/RpiA/CoA transferase-like"/>
    <property type="match status" value="1"/>
</dbReference>
<evidence type="ECO:0000255" key="1">
    <source>
        <dbReference type="HAMAP-Rule" id="MF_00170"/>
    </source>
</evidence>
<reference key="1">
    <citation type="journal article" date="2003" name="Nat. Genet.">
        <title>Comparative analysis of the genome sequences of Bordetella pertussis, Bordetella parapertussis and Bordetella bronchiseptica.</title>
        <authorList>
            <person name="Parkhill J."/>
            <person name="Sebaihia M."/>
            <person name="Preston A."/>
            <person name="Murphy L.D."/>
            <person name="Thomson N.R."/>
            <person name="Harris D.E."/>
            <person name="Holden M.T.G."/>
            <person name="Churcher C.M."/>
            <person name="Bentley S.D."/>
            <person name="Mungall K.L."/>
            <person name="Cerdeno-Tarraga A.-M."/>
            <person name="Temple L."/>
            <person name="James K.D."/>
            <person name="Harris B."/>
            <person name="Quail M.A."/>
            <person name="Achtman M."/>
            <person name="Atkin R."/>
            <person name="Baker S."/>
            <person name="Basham D."/>
            <person name="Bason N."/>
            <person name="Cherevach I."/>
            <person name="Chillingworth T."/>
            <person name="Collins M."/>
            <person name="Cronin A."/>
            <person name="Davis P."/>
            <person name="Doggett J."/>
            <person name="Feltwell T."/>
            <person name="Goble A."/>
            <person name="Hamlin N."/>
            <person name="Hauser H."/>
            <person name="Holroyd S."/>
            <person name="Jagels K."/>
            <person name="Leather S."/>
            <person name="Moule S."/>
            <person name="Norberczak H."/>
            <person name="O'Neil S."/>
            <person name="Ormond D."/>
            <person name="Price C."/>
            <person name="Rabbinowitsch E."/>
            <person name="Rutter S."/>
            <person name="Sanders M."/>
            <person name="Saunders D."/>
            <person name="Seeger K."/>
            <person name="Sharp S."/>
            <person name="Simmonds M."/>
            <person name="Skelton J."/>
            <person name="Squares R."/>
            <person name="Squares S."/>
            <person name="Stevens K."/>
            <person name="Unwin L."/>
            <person name="Whitehead S."/>
            <person name="Barrell B.G."/>
            <person name="Maskell D.J."/>
        </authorList>
    </citation>
    <scope>NUCLEOTIDE SEQUENCE [LARGE SCALE GENOMIC DNA]</scope>
    <source>
        <strain>ATCC BAA-588 / NCTC 13252 / RB50</strain>
    </source>
</reference>